<name>KLK1_MACFA</name>
<keyword id="KW-1015">Disulfide bond</keyword>
<keyword id="KW-0325">Glycoprotein</keyword>
<keyword id="KW-0378">Hydrolase</keyword>
<keyword id="KW-0645">Protease</keyword>
<keyword id="KW-1185">Reference proteome</keyword>
<keyword id="KW-0720">Serine protease</keyword>
<keyword id="KW-0732">Signal</keyword>
<keyword id="KW-0865">Zymogen</keyword>
<evidence type="ECO:0000250" key="1"/>
<evidence type="ECO:0000255" key="2"/>
<evidence type="ECO:0000255" key="3">
    <source>
        <dbReference type="PROSITE-ProRule" id="PRU00274"/>
    </source>
</evidence>
<evidence type="ECO:0000305" key="4"/>
<accession>Q07276</accession>
<organism>
    <name type="scientific">Macaca fascicularis</name>
    <name type="common">Crab-eating macaque</name>
    <name type="synonym">Cynomolgus monkey</name>
    <dbReference type="NCBI Taxonomy" id="9541"/>
    <lineage>
        <taxon>Eukaryota</taxon>
        <taxon>Metazoa</taxon>
        <taxon>Chordata</taxon>
        <taxon>Craniata</taxon>
        <taxon>Vertebrata</taxon>
        <taxon>Euteleostomi</taxon>
        <taxon>Mammalia</taxon>
        <taxon>Eutheria</taxon>
        <taxon>Euarchontoglires</taxon>
        <taxon>Primates</taxon>
        <taxon>Haplorrhini</taxon>
        <taxon>Catarrhini</taxon>
        <taxon>Cercopithecidae</taxon>
        <taxon>Cercopithecinae</taxon>
        <taxon>Macaca</taxon>
    </lineage>
</organism>
<protein>
    <recommendedName>
        <fullName>Kallikrein-1</fullName>
        <ecNumber>3.4.21.35</ecNumber>
    </recommendedName>
    <alternativeName>
        <fullName>Kidney/pancreas/salivary gland kallikrein</fullName>
    </alternativeName>
    <alternativeName>
        <fullName>Tissue kallikrein</fullName>
    </alternativeName>
</protein>
<dbReference type="EC" id="3.4.21.35"/>
<dbReference type="EMBL" id="L10039">
    <property type="protein sequence ID" value="AAA36853.1"/>
    <property type="molecule type" value="mRNA"/>
</dbReference>
<dbReference type="PIR" id="S33772">
    <property type="entry name" value="S33772"/>
</dbReference>
<dbReference type="RefSeq" id="NP_001272131.1">
    <property type="nucleotide sequence ID" value="NM_001285202.1"/>
</dbReference>
<dbReference type="SMR" id="Q07276"/>
<dbReference type="STRING" id="9541.ENSMFAP00000005907"/>
<dbReference type="GlyCosmos" id="Q07276">
    <property type="glycosylation" value="6 sites, No reported glycans"/>
</dbReference>
<dbReference type="eggNOG" id="KOG3627">
    <property type="taxonomic scope" value="Eukaryota"/>
</dbReference>
<dbReference type="BRENDA" id="3.4.21.35">
    <property type="organism ID" value="1793"/>
</dbReference>
<dbReference type="Proteomes" id="UP000233100">
    <property type="component" value="Unplaced"/>
</dbReference>
<dbReference type="GO" id="GO:0030141">
    <property type="term" value="C:secretory granule"/>
    <property type="evidence" value="ECO:0007669"/>
    <property type="project" value="TreeGrafter"/>
</dbReference>
<dbReference type="GO" id="GO:0004252">
    <property type="term" value="F:serine-type endopeptidase activity"/>
    <property type="evidence" value="ECO:0007669"/>
    <property type="project" value="UniProtKB-EC"/>
</dbReference>
<dbReference type="GO" id="GO:0003073">
    <property type="term" value="P:regulation of systemic arterial blood pressure"/>
    <property type="evidence" value="ECO:0007669"/>
    <property type="project" value="TreeGrafter"/>
</dbReference>
<dbReference type="GO" id="GO:0031638">
    <property type="term" value="P:zymogen activation"/>
    <property type="evidence" value="ECO:0007669"/>
    <property type="project" value="TreeGrafter"/>
</dbReference>
<dbReference type="CDD" id="cd00190">
    <property type="entry name" value="Tryp_SPc"/>
    <property type="match status" value="1"/>
</dbReference>
<dbReference type="FunFam" id="2.40.10.10:FF:000042">
    <property type="entry name" value="Kallikrein 1-related peptidase C9"/>
    <property type="match status" value="1"/>
</dbReference>
<dbReference type="Gene3D" id="2.40.10.10">
    <property type="entry name" value="Trypsin-like serine proteases"/>
    <property type="match status" value="2"/>
</dbReference>
<dbReference type="InterPro" id="IPR009003">
    <property type="entry name" value="Peptidase_S1_PA"/>
</dbReference>
<dbReference type="InterPro" id="IPR043504">
    <property type="entry name" value="Peptidase_S1_PA_chymotrypsin"/>
</dbReference>
<dbReference type="InterPro" id="IPR001314">
    <property type="entry name" value="Peptidase_S1A"/>
</dbReference>
<dbReference type="InterPro" id="IPR001254">
    <property type="entry name" value="Trypsin_dom"/>
</dbReference>
<dbReference type="InterPro" id="IPR018114">
    <property type="entry name" value="TRYPSIN_HIS"/>
</dbReference>
<dbReference type="InterPro" id="IPR033116">
    <property type="entry name" value="TRYPSIN_SER"/>
</dbReference>
<dbReference type="PANTHER" id="PTHR24271:SF47">
    <property type="entry name" value="KALLIKREIN-1"/>
    <property type="match status" value="1"/>
</dbReference>
<dbReference type="PANTHER" id="PTHR24271">
    <property type="entry name" value="KALLIKREIN-RELATED"/>
    <property type="match status" value="1"/>
</dbReference>
<dbReference type="Pfam" id="PF00089">
    <property type="entry name" value="Trypsin"/>
    <property type="match status" value="1"/>
</dbReference>
<dbReference type="PRINTS" id="PR00722">
    <property type="entry name" value="CHYMOTRYPSIN"/>
</dbReference>
<dbReference type="SMART" id="SM00020">
    <property type="entry name" value="Tryp_SPc"/>
    <property type="match status" value="1"/>
</dbReference>
<dbReference type="SUPFAM" id="SSF50494">
    <property type="entry name" value="Trypsin-like serine proteases"/>
    <property type="match status" value="1"/>
</dbReference>
<dbReference type="PROSITE" id="PS50240">
    <property type="entry name" value="TRYPSIN_DOM"/>
    <property type="match status" value="1"/>
</dbReference>
<dbReference type="PROSITE" id="PS00134">
    <property type="entry name" value="TRYPSIN_HIS"/>
    <property type="match status" value="1"/>
</dbReference>
<dbReference type="PROSITE" id="PS00135">
    <property type="entry name" value="TRYPSIN_SER"/>
    <property type="match status" value="1"/>
</dbReference>
<proteinExistence type="evidence at transcript level"/>
<comment type="function">
    <text>Glandular kallikreins cleave Met-Lys and Arg-Ser bonds in kininogen to release Lys-bradykinin.</text>
</comment>
<comment type="catalytic activity">
    <reaction>
        <text>Preferential cleavage of Arg-|-Xaa bonds in small molecule substrates. Highly selective action to release kallidin (lysyl-bradykinin) from kininogen involves hydrolysis of Met-|-Xaa or Leu-|-Xaa.</text>
        <dbReference type="EC" id="3.4.21.35"/>
    </reaction>
</comment>
<comment type="similarity">
    <text evidence="3">Belongs to the peptidase S1 family. Kallikrein subfamily.</text>
</comment>
<feature type="signal peptide" evidence="1">
    <location>
        <begin position="1"/>
        <end position="18"/>
    </location>
</feature>
<feature type="propeptide" id="PRO_0000027925" description="Activation peptide" evidence="4">
    <location>
        <begin position="19"/>
        <end position="24"/>
    </location>
</feature>
<feature type="chain" id="PRO_0000027926" description="Kallikrein-1">
    <location>
        <begin position="25"/>
        <end position="257"/>
    </location>
</feature>
<feature type="domain" description="Peptidase S1" evidence="3">
    <location>
        <begin position="25"/>
        <end position="254"/>
    </location>
</feature>
<feature type="active site" description="Charge relay system" evidence="1">
    <location>
        <position position="62"/>
    </location>
</feature>
<feature type="active site" description="Charge relay system" evidence="1">
    <location>
        <position position="116"/>
    </location>
</feature>
<feature type="active site" description="Charge relay system" evidence="1">
    <location>
        <position position="209"/>
    </location>
</feature>
<feature type="glycosylation site" description="O-linked (GalNAc...) serine" evidence="1">
    <location>
        <position position="90"/>
    </location>
</feature>
<feature type="glycosylation site" description="N-linked (GlcNAc...) asparagine" evidence="2">
    <location>
        <position position="99"/>
    </location>
</feature>
<feature type="glycosylation site" description="O-linked (GalNAc...) serine" evidence="1">
    <location>
        <position position="101"/>
    </location>
</feature>
<feature type="glycosylation site" description="N-linked (GlcNAc...) asparagine" evidence="2">
    <location>
        <position position="105"/>
    </location>
</feature>
<feature type="glycosylation site" description="N-linked (GlcNAc...) asparagine" evidence="2">
    <location>
        <position position="160"/>
    </location>
</feature>
<feature type="glycosylation site" description="O-linked (GalNAc...) serine" evidence="1">
    <location>
        <position position="162"/>
    </location>
</feature>
<feature type="disulfide bond" evidence="3">
    <location>
        <begin position="31"/>
        <end position="169"/>
    </location>
</feature>
<feature type="disulfide bond" evidence="3">
    <location>
        <begin position="47"/>
        <end position="63"/>
    </location>
</feature>
<feature type="disulfide bond" evidence="3">
    <location>
        <begin position="148"/>
        <end position="215"/>
    </location>
</feature>
<feature type="disulfide bond" evidence="3">
    <location>
        <begin position="180"/>
        <end position="194"/>
    </location>
</feature>
<feature type="disulfide bond" evidence="3">
    <location>
        <begin position="205"/>
        <end position="230"/>
    </location>
</feature>
<reference key="1">
    <citation type="journal article" date="1993" name="Biochim. Biophys. Acta">
        <title>Molecular cloning and sequence analysis of the monkey and human tissue kallikrein genes.</title>
        <authorList>
            <person name="Lin F.K."/>
            <person name="Lin C.H."/>
            <person name="Chou C."/>
            <person name="Chen K."/>
            <person name="Lu H.S."/>
            <person name="Bacheller B."/>
            <person name="Herrera C."/>
            <person name="Jones T."/>
            <person name="Chao J."/>
            <person name="Chao L."/>
        </authorList>
    </citation>
    <scope>NUCLEOTIDE SEQUENCE [MRNA]</scope>
</reference>
<sequence length="257" mass="28237">MWFLVLCLALSLGGTGRAPPIQSRIVGGWECSQPWQAALYHFSTFQCGGILVHPQWVLTAAHCISDNYQLWLGRHNLFDDEDTAQFVHVSESFPHPGFNMSLLKNHTRQADDYSHDLMLLRLTQPAEITDAVQVVELPTQEPEVGSTCLASGWGSIEPENFSFPDDLQCVDLEILPNDECAKAHTQKVTEFMLCAGHLEGGKDTCVGDSGGPLTCDGVLQGVTSWGYIPCGSPNKPAVFVKVLSYVKWIEDTIAENS</sequence>
<gene>
    <name type="primary">KLK1</name>
</gene>